<organism>
    <name type="scientific">Mus musculus</name>
    <name type="common">Mouse</name>
    <dbReference type="NCBI Taxonomy" id="10090"/>
    <lineage>
        <taxon>Eukaryota</taxon>
        <taxon>Metazoa</taxon>
        <taxon>Chordata</taxon>
        <taxon>Craniata</taxon>
        <taxon>Vertebrata</taxon>
        <taxon>Euteleostomi</taxon>
        <taxon>Mammalia</taxon>
        <taxon>Eutheria</taxon>
        <taxon>Euarchontoglires</taxon>
        <taxon>Glires</taxon>
        <taxon>Rodentia</taxon>
        <taxon>Myomorpha</taxon>
        <taxon>Muroidea</taxon>
        <taxon>Muridae</taxon>
        <taxon>Murinae</taxon>
        <taxon>Mus</taxon>
        <taxon>Mus</taxon>
    </lineage>
</organism>
<sequence length="320" mass="35427">MTAWDGVLPFYPQPRHAASFSVPLLIVILVFLSLAASFLFILPGIRGHSRWFWLVRVLLSLFIGAEIVAVHFSGDWFVGRVWTNTSYKAFSPSRVQVHVGLHVGLAGVNITLRGTPRQQLNETIDYNERFTWRLNEDYTKEYVHALEKGLPDPVLYLAEKFTPSSPCGLYHQYHLAGHYAAATLWVAFCFWIIANALLSMPAPLYGGLALLTTGAFTLFGVFAFASISSVPLCHFRLGSAVLTPYYGASFWLTLATGILSLLLGGAVVILHYTRPSALRSFLDLSVKDCSNQAKGNSPLTLNNPQHEQLKSPDLNITTLL</sequence>
<evidence type="ECO:0000250" key="1"/>
<evidence type="ECO:0000250" key="2">
    <source>
        <dbReference type="UniProtKB" id="Q1HG44"/>
    </source>
</evidence>
<evidence type="ECO:0000255" key="3"/>
<evidence type="ECO:0000255" key="4">
    <source>
        <dbReference type="PROSITE-ProRule" id="PRU00114"/>
    </source>
</evidence>
<evidence type="ECO:0000305" key="5"/>
<accession>Q9D311</accession>
<accession>A2AQ98</accession>
<accession>Q9D7U8</accession>
<name>DOXA2_MOUSE</name>
<reference key="1">
    <citation type="journal article" date="2005" name="Science">
        <title>The transcriptional landscape of the mammalian genome.</title>
        <authorList>
            <person name="Carninci P."/>
            <person name="Kasukawa T."/>
            <person name="Katayama S."/>
            <person name="Gough J."/>
            <person name="Frith M.C."/>
            <person name="Maeda N."/>
            <person name="Oyama R."/>
            <person name="Ravasi T."/>
            <person name="Lenhard B."/>
            <person name="Wells C."/>
            <person name="Kodzius R."/>
            <person name="Shimokawa K."/>
            <person name="Bajic V.B."/>
            <person name="Brenner S.E."/>
            <person name="Batalov S."/>
            <person name="Forrest A.R."/>
            <person name="Zavolan M."/>
            <person name="Davis M.J."/>
            <person name="Wilming L.G."/>
            <person name="Aidinis V."/>
            <person name="Allen J.E."/>
            <person name="Ambesi-Impiombato A."/>
            <person name="Apweiler R."/>
            <person name="Aturaliya R.N."/>
            <person name="Bailey T.L."/>
            <person name="Bansal M."/>
            <person name="Baxter L."/>
            <person name="Beisel K.W."/>
            <person name="Bersano T."/>
            <person name="Bono H."/>
            <person name="Chalk A.M."/>
            <person name="Chiu K.P."/>
            <person name="Choudhary V."/>
            <person name="Christoffels A."/>
            <person name="Clutterbuck D.R."/>
            <person name="Crowe M.L."/>
            <person name="Dalla E."/>
            <person name="Dalrymple B.P."/>
            <person name="de Bono B."/>
            <person name="Della Gatta G."/>
            <person name="di Bernardo D."/>
            <person name="Down T."/>
            <person name="Engstrom P."/>
            <person name="Fagiolini M."/>
            <person name="Faulkner G."/>
            <person name="Fletcher C.F."/>
            <person name="Fukushima T."/>
            <person name="Furuno M."/>
            <person name="Futaki S."/>
            <person name="Gariboldi M."/>
            <person name="Georgii-Hemming P."/>
            <person name="Gingeras T.R."/>
            <person name="Gojobori T."/>
            <person name="Green R.E."/>
            <person name="Gustincich S."/>
            <person name="Harbers M."/>
            <person name="Hayashi Y."/>
            <person name="Hensch T.K."/>
            <person name="Hirokawa N."/>
            <person name="Hill D."/>
            <person name="Huminiecki L."/>
            <person name="Iacono M."/>
            <person name="Ikeo K."/>
            <person name="Iwama A."/>
            <person name="Ishikawa T."/>
            <person name="Jakt M."/>
            <person name="Kanapin A."/>
            <person name="Katoh M."/>
            <person name="Kawasawa Y."/>
            <person name="Kelso J."/>
            <person name="Kitamura H."/>
            <person name="Kitano H."/>
            <person name="Kollias G."/>
            <person name="Krishnan S.P."/>
            <person name="Kruger A."/>
            <person name="Kummerfeld S.K."/>
            <person name="Kurochkin I.V."/>
            <person name="Lareau L.F."/>
            <person name="Lazarevic D."/>
            <person name="Lipovich L."/>
            <person name="Liu J."/>
            <person name="Liuni S."/>
            <person name="McWilliam S."/>
            <person name="Madan Babu M."/>
            <person name="Madera M."/>
            <person name="Marchionni L."/>
            <person name="Matsuda H."/>
            <person name="Matsuzawa S."/>
            <person name="Miki H."/>
            <person name="Mignone F."/>
            <person name="Miyake S."/>
            <person name="Morris K."/>
            <person name="Mottagui-Tabar S."/>
            <person name="Mulder N."/>
            <person name="Nakano N."/>
            <person name="Nakauchi H."/>
            <person name="Ng P."/>
            <person name="Nilsson R."/>
            <person name="Nishiguchi S."/>
            <person name="Nishikawa S."/>
            <person name="Nori F."/>
            <person name="Ohara O."/>
            <person name="Okazaki Y."/>
            <person name="Orlando V."/>
            <person name="Pang K.C."/>
            <person name="Pavan W.J."/>
            <person name="Pavesi G."/>
            <person name="Pesole G."/>
            <person name="Petrovsky N."/>
            <person name="Piazza S."/>
            <person name="Reed J."/>
            <person name="Reid J.F."/>
            <person name="Ring B.Z."/>
            <person name="Ringwald M."/>
            <person name="Rost B."/>
            <person name="Ruan Y."/>
            <person name="Salzberg S.L."/>
            <person name="Sandelin A."/>
            <person name="Schneider C."/>
            <person name="Schoenbach C."/>
            <person name="Sekiguchi K."/>
            <person name="Semple C.A."/>
            <person name="Seno S."/>
            <person name="Sessa L."/>
            <person name="Sheng Y."/>
            <person name="Shibata Y."/>
            <person name="Shimada H."/>
            <person name="Shimada K."/>
            <person name="Silva D."/>
            <person name="Sinclair B."/>
            <person name="Sperling S."/>
            <person name="Stupka E."/>
            <person name="Sugiura K."/>
            <person name="Sultana R."/>
            <person name="Takenaka Y."/>
            <person name="Taki K."/>
            <person name="Tammoja K."/>
            <person name="Tan S.L."/>
            <person name="Tang S."/>
            <person name="Taylor M.S."/>
            <person name="Tegner J."/>
            <person name="Teichmann S.A."/>
            <person name="Ueda H.R."/>
            <person name="van Nimwegen E."/>
            <person name="Verardo R."/>
            <person name="Wei C.L."/>
            <person name="Yagi K."/>
            <person name="Yamanishi H."/>
            <person name="Zabarovsky E."/>
            <person name="Zhu S."/>
            <person name="Zimmer A."/>
            <person name="Hide W."/>
            <person name="Bult C."/>
            <person name="Grimmond S.M."/>
            <person name="Teasdale R.D."/>
            <person name="Liu E.T."/>
            <person name="Brusic V."/>
            <person name="Quackenbush J."/>
            <person name="Wahlestedt C."/>
            <person name="Mattick J.S."/>
            <person name="Hume D.A."/>
            <person name="Kai C."/>
            <person name="Sasaki D."/>
            <person name="Tomaru Y."/>
            <person name="Fukuda S."/>
            <person name="Kanamori-Katayama M."/>
            <person name="Suzuki M."/>
            <person name="Aoki J."/>
            <person name="Arakawa T."/>
            <person name="Iida J."/>
            <person name="Imamura K."/>
            <person name="Itoh M."/>
            <person name="Kato T."/>
            <person name="Kawaji H."/>
            <person name="Kawagashira N."/>
            <person name="Kawashima T."/>
            <person name="Kojima M."/>
            <person name="Kondo S."/>
            <person name="Konno H."/>
            <person name="Nakano K."/>
            <person name="Ninomiya N."/>
            <person name="Nishio T."/>
            <person name="Okada M."/>
            <person name="Plessy C."/>
            <person name="Shibata K."/>
            <person name="Shiraki T."/>
            <person name="Suzuki S."/>
            <person name="Tagami M."/>
            <person name="Waki K."/>
            <person name="Watahiki A."/>
            <person name="Okamura-Oho Y."/>
            <person name="Suzuki H."/>
            <person name="Kawai J."/>
            <person name="Hayashizaki Y."/>
        </authorList>
    </citation>
    <scope>NUCLEOTIDE SEQUENCE [LARGE SCALE MRNA]</scope>
    <source>
        <strain>C57BL/6J</strain>
        <tissue>Colon</tissue>
        <tissue>Stomach</tissue>
    </source>
</reference>
<reference key="2">
    <citation type="journal article" date="2009" name="PLoS Biol.">
        <title>Lineage-specific biology revealed by a finished genome assembly of the mouse.</title>
        <authorList>
            <person name="Church D.M."/>
            <person name="Goodstadt L."/>
            <person name="Hillier L.W."/>
            <person name="Zody M.C."/>
            <person name="Goldstein S."/>
            <person name="She X."/>
            <person name="Bult C.J."/>
            <person name="Agarwala R."/>
            <person name="Cherry J.L."/>
            <person name="DiCuccio M."/>
            <person name="Hlavina W."/>
            <person name="Kapustin Y."/>
            <person name="Meric P."/>
            <person name="Maglott D."/>
            <person name="Birtle Z."/>
            <person name="Marques A.C."/>
            <person name="Graves T."/>
            <person name="Zhou S."/>
            <person name="Teague B."/>
            <person name="Potamousis K."/>
            <person name="Churas C."/>
            <person name="Place M."/>
            <person name="Herschleb J."/>
            <person name="Runnheim R."/>
            <person name="Forrest D."/>
            <person name="Amos-Landgraf J."/>
            <person name="Schwartz D.C."/>
            <person name="Cheng Z."/>
            <person name="Lindblad-Toh K."/>
            <person name="Eichler E.E."/>
            <person name="Ponting C.P."/>
        </authorList>
    </citation>
    <scope>NUCLEOTIDE SEQUENCE [LARGE SCALE GENOMIC DNA]</scope>
    <source>
        <strain>C57BL/6J</strain>
    </source>
</reference>
<reference key="3">
    <citation type="journal article" date="2004" name="Genome Res.">
        <title>The status, quality, and expansion of the NIH full-length cDNA project: the Mammalian Gene Collection (MGC).</title>
        <authorList>
            <consortium name="The MGC Project Team"/>
        </authorList>
    </citation>
    <scope>NUCLEOTIDE SEQUENCE [LARGE SCALE MRNA]</scope>
    <source>
        <strain>FVB/N</strain>
        <tissue>Colon</tissue>
    </source>
</reference>
<feature type="chain" id="PRO_0000264246" description="Dual oxidase maturation factor 2">
    <location>
        <begin position="1"/>
        <end position="320"/>
    </location>
</feature>
<feature type="transmembrane region" description="Helical" evidence="3">
    <location>
        <begin position="22"/>
        <end position="42"/>
    </location>
</feature>
<feature type="topological domain" description="Cytoplasmic" evidence="3">
    <location>
        <begin position="43"/>
        <end position="51"/>
    </location>
</feature>
<feature type="transmembrane region" description="Helical" evidence="3">
    <location>
        <begin position="52"/>
        <end position="72"/>
    </location>
</feature>
<feature type="topological domain" description="Extracellular" evidence="3">
    <location>
        <begin position="73"/>
        <end position="183"/>
    </location>
</feature>
<feature type="transmembrane region" description="Helical" evidence="3">
    <location>
        <begin position="184"/>
        <end position="204"/>
    </location>
</feature>
<feature type="topological domain" description="Cytoplasmic" evidence="3">
    <location>
        <begin position="205"/>
        <end position="206"/>
    </location>
</feature>
<feature type="transmembrane region" description="Helical" evidence="3">
    <location>
        <begin position="207"/>
        <end position="227"/>
    </location>
</feature>
<feature type="topological domain" description="Extracellular" evidence="3">
    <location>
        <begin position="228"/>
        <end position="249"/>
    </location>
</feature>
<feature type="transmembrane region" description="Helical" evidence="3">
    <location>
        <begin position="250"/>
        <end position="270"/>
    </location>
</feature>
<feature type="topological domain" description="Cytoplasmic" evidence="3">
    <location>
        <begin position="271"/>
        <end position="320"/>
    </location>
</feature>
<feature type="glycosylation site" description="N-linked (GlcNAc...) asparagine" evidence="3">
    <location>
        <position position="84"/>
    </location>
</feature>
<feature type="glycosylation site" description="N-linked (GlcNAc...) asparagine" evidence="3">
    <location>
        <position position="109"/>
    </location>
</feature>
<feature type="glycosylation site" description="N-linked (GlcNAc...) asparagine" evidence="3">
    <location>
        <position position="121"/>
    </location>
</feature>
<feature type="disulfide bond" description="Interchain (with C-568 in DUXA2)" evidence="4">
    <location>
        <position position="167"/>
    </location>
</feature>
<feature type="disulfide bond" description="Interchain (with C-582 in DUXA2)" evidence="4">
    <location>
        <position position="233"/>
    </location>
</feature>
<feature type="sequence conflict" description="In Ref. 1; BAB25910." evidence="5" ref="1">
    <original>GR</original>
    <variation>EE</variation>
    <location>
        <begin position="79"/>
        <end position="80"/>
    </location>
</feature>
<feature type="sequence conflict" description="In Ref. 1; BAB25910." evidence="5" ref="1">
    <original>L</original>
    <variation>F</variation>
    <location>
        <position position="146"/>
    </location>
</feature>
<feature type="sequence conflict" description="In Ref. 1; BAB25910." evidence="5" ref="1">
    <original>A</original>
    <variation>P</variation>
    <location>
        <position position="176"/>
    </location>
</feature>
<feature type="sequence conflict" description="In Ref. 1; BAB25910." evidence="5" ref="1">
    <original>A</original>
    <variation>V</variation>
    <location>
        <position position="209"/>
    </location>
</feature>
<feature type="sequence conflict" description="In Ref. 1; BAB25910." evidence="5" ref="1">
    <original>T</original>
    <variation>A</variation>
    <location>
        <position position="217"/>
    </location>
</feature>
<feature type="sequence conflict" description="In Ref. 1; BAB25910." evidence="5" ref="1">
    <original>F</original>
    <variation>S</variation>
    <location>
        <position position="235"/>
    </location>
</feature>
<feature type="sequence conflict" description="In Ref. 1; BAB25910." evidence="5" ref="1">
    <original>L</original>
    <variation>F</variation>
    <location>
        <position position="242"/>
    </location>
</feature>
<gene>
    <name type="primary">Duoxa2</name>
</gene>
<proteinExistence type="evidence at transcript level"/>
<comment type="function">
    <text evidence="1">Required for the maturation and the transport from the endoplasmic reticulum to the plasma membrane of functional DUOX2. May play a role in thyroid hormone synthesis (By similarity).</text>
</comment>
<comment type="subunit">
    <text evidence="2">Heterodimer with DUXA2; disulfide-linked (By similarity). Interacts with CSNK1G2 (By similarity).</text>
</comment>
<comment type="subcellular location">
    <subcellularLocation>
        <location evidence="1">Endoplasmic reticulum membrane</location>
        <topology evidence="1">Multi-pass membrane protein</topology>
    </subcellularLocation>
</comment>
<comment type="PTM">
    <text evidence="1">N-glycosylated.</text>
</comment>
<comment type="similarity">
    <text evidence="5">Belongs to the DUOXA family.</text>
</comment>
<comment type="sequence caution" evidence="5">
    <conflict type="frameshift">
        <sequence resource="EMBL-CDS" id="BAB25910"/>
    </conflict>
</comment>
<dbReference type="EMBL" id="AK008816">
    <property type="protein sequence ID" value="BAB25910.1"/>
    <property type="status" value="ALT_FRAME"/>
    <property type="molecule type" value="mRNA"/>
</dbReference>
<dbReference type="EMBL" id="AK018569">
    <property type="protein sequence ID" value="BAB31281.1"/>
    <property type="molecule type" value="mRNA"/>
</dbReference>
<dbReference type="EMBL" id="AL844566">
    <property type="status" value="NOT_ANNOTATED_CDS"/>
    <property type="molecule type" value="Genomic_DNA"/>
</dbReference>
<dbReference type="EMBL" id="BC031111">
    <property type="protein sequence ID" value="AAH31111.1"/>
    <property type="molecule type" value="mRNA"/>
</dbReference>
<dbReference type="CCDS" id="CCDS16660.1"/>
<dbReference type="RefSeq" id="NP_080053.1">
    <property type="nucleotide sequence ID" value="NM_025777.3"/>
</dbReference>
<dbReference type="SMR" id="Q9D311"/>
<dbReference type="FunCoup" id="Q9D311">
    <property type="interactions" value="112"/>
</dbReference>
<dbReference type="STRING" id="10090.ENSMUSP00000028656"/>
<dbReference type="GlyCosmos" id="Q9D311">
    <property type="glycosylation" value="3 sites, No reported glycans"/>
</dbReference>
<dbReference type="GlyGen" id="Q9D311">
    <property type="glycosylation" value="3 sites"/>
</dbReference>
<dbReference type="PhosphoSitePlus" id="Q9D311"/>
<dbReference type="PaxDb" id="10090-ENSMUSP00000028656"/>
<dbReference type="ProteomicsDB" id="277375"/>
<dbReference type="Antibodypedia" id="2475">
    <property type="antibodies" value="94 antibodies from 17 providers"/>
</dbReference>
<dbReference type="DNASU" id="66811"/>
<dbReference type="Ensembl" id="ENSMUST00000028656.2">
    <property type="protein sequence ID" value="ENSMUSP00000028656.2"/>
    <property type="gene ID" value="ENSMUSG00000027225.8"/>
</dbReference>
<dbReference type="GeneID" id="66811"/>
<dbReference type="KEGG" id="mmu:66811"/>
<dbReference type="UCSC" id="uc008mam.1">
    <property type="organism name" value="mouse"/>
</dbReference>
<dbReference type="AGR" id="MGI:1914061"/>
<dbReference type="CTD" id="405753"/>
<dbReference type="MGI" id="MGI:1914061">
    <property type="gene designation" value="Duoxa2"/>
</dbReference>
<dbReference type="VEuPathDB" id="HostDB:ENSMUSG00000027225"/>
<dbReference type="eggNOG" id="KOG3921">
    <property type="taxonomic scope" value="Eukaryota"/>
</dbReference>
<dbReference type="GeneTree" id="ENSGT00390000008240"/>
<dbReference type="HOGENOM" id="CLU_045258_0_0_1"/>
<dbReference type="InParanoid" id="Q9D311"/>
<dbReference type="OMA" id="MHINITY"/>
<dbReference type="OrthoDB" id="10042652at2759"/>
<dbReference type="PhylomeDB" id="Q9D311"/>
<dbReference type="TreeFam" id="TF312996"/>
<dbReference type="BioGRID-ORCS" id="66811">
    <property type="hits" value="3 hits in 79 CRISPR screens"/>
</dbReference>
<dbReference type="PRO" id="PR:Q9D311"/>
<dbReference type="Proteomes" id="UP000000589">
    <property type="component" value="Chromosome 2"/>
</dbReference>
<dbReference type="RNAct" id="Q9D311">
    <property type="molecule type" value="protein"/>
</dbReference>
<dbReference type="Bgee" id="ENSMUSG00000027225">
    <property type="expression patterns" value="Expressed in mesodermal cell in embryo and 26 other cell types or tissues"/>
</dbReference>
<dbReference type="GO" id="GO:0045177">
    <property type="term" value="C:apical part of cell"/>
    <property type="evidence" value="ECO:0000250"/>
    <property type="project" value="UniProtKB"/>
</dbReference>
<dbReference type="GO" id="GO:0031252">
    <property type="term" value="C:cell leading edge"/>
    <property type="evidence" value="ECO:0007669"/>
    <property type="project" value="Ensembl"/>
</dbReference>
<dbReference type="GO" id="GO:0005829">
    <property type="term" value="C:cytosol"/>
    <property type="evidence" value="ECO:0000250"/>
    <property type="project" value="UniProtKB"/>
</dbReference>
<dbReference type="GO" id="GO:0005783">
    <property type="term" value="C:endoplasmic reticulum"/>
    <property type="evidence" value="ECO:0000250"/>
    <property type="project" value="UniProtKB"/>
</dbReference>
<dbReference type="GO" id="GO:0005789">
    <property type="term" value="C:endoplasmic reticulum membrane"/>
    <property type="evidence" value="ECO:0007669"/>
    <property type="project" value="UniProtKB-SubCell"/>
</dbReference>
<dbReference type="GO" id="GO:0005886">
    <property type="term" value="C:plasma membrane"/>
    <property type="evidence" value="ECO:0000250"/>
    <property type="project" value="UniProtKB"/>
</dbReference>
<dbReference type="GO" id="GO:0019899">
    <property type="term" value="F:enzyme binding"/>
    <property type="evidence" value="ECO:0007669"/>
    <property type="project" value="Ensembl"/>
</dbReference>
<dbReference type="GO" id="GO:0042743">
    <property type="term" value="P:hydrogen peroxide metabolic process"/>
    <property type="evidence" value="ECO:0000316"/>
    <property type="project" value="MGI"/>
</dbReference>
<dbReference type="GO" id="GO:2000147">
    <property type="term" value="P:positive regulation of cell motility"/>
    <property type="evidence" value="ECO:0000250"/>
    <property type="project" value="UniProtKB"/>
</dbReference>
<dbReference type="GO" id="GO:0010729">
    <property type="term" value="P:positive regulation of hydrogen peroxide biosynthetic process"/>
    <property type="evidence" value="ECO:0000250"/>
    <property type="project" value="UniProtKB"/>
</dbReference>
<dbReference type="GO" id="GO:0051604">
    <property type="term" value="P:protein maturation"/>
    <property type="evidence" value="ECO:0007669"/>
    <property type="project" value="Ensembl"/>
</dbReference>
<dbReference type="GO" id="GO:0015031">
    <property type="term" value="P:protein transport"/>
    <property type="evidence" value="ECO:0007669"/>
    <property type="project" value="UniProtKB-KW"/>
</dbReference>
<dbReference type="GO" id="GO:0050727">
    <property type="term" value="P:regulation of inflammatory response"/>
    <property type="evidence" value="ECO:0000316"/>
    <property type="project" value="MGI"/>
</dbReference>
<dbReference type="GO" id="GO:2000609">
    <property type="term" value="P:regulation of thyroid hormone generation"/>
    <property type="evidence" value="ECO:0000316"/>
    <property type="project" value="MGI"/>
</dbReference>
<dbReference type="InterPro" id="IPR018469">
    <property type="entry name" value="Dual_oxidase_maturation_fac"/>
</dbReference>
<dbReference type="PANTHER" id="PTHR31158">
    <property type="entry name" value="DUAL OXIDASE 2"/>
    <property type="match status" value="1"/>
</dbReference>
<dbReference type="PANTHER" id="PTHR31158:SF2">
    <property type="entry name" value="DUAL OXIDASE MATURATION FACTOR 2"/>
    <property type="match status" value="1"/>
</dbReference>
<dbReference type="Pfam" id="PF10204">
    <property type="entry name" value="DuoxA"/>
    <property type="match status" value="1"/>
</dbReference>
<protein>
    <recommendedName>
        <fullName>Dual oxidase maturation factor 2</fullName>
    </recommendedName>
</protein>
<keyword id="KW-1015">Disulfide bond</keyword>
<keyword id="KW-0256">Endoplasmic reticulum</keyword>
<keyword id="KW-0325">Glycoprotein</keyword>
<keyword id="KW-0472">Membrane</keyword>
<keyword id="KW-0653">Protein transport</keyword>
<keyword id="KW-1185">Reference proteome</keyword>
<keyword id="KW-0812">Transmembrane</keyword>
<keyword id="KW-1133">Transmembrane helix</keyword>
<keyword id="KW-0813">Transport</keyword>